<evidence type="ECO:0000255" key="1">
    <source>
        <dbReference type="HAMAP-Rule" id="MF_00270"/>
    </source>
</evidence>
<evidence type="ECO:0000305" key="2"/>
<protein>
    <recommendedName>
        <fullName evidence="1">Small ribosomal subunit protein bS18</fullName>
    </recommendedName>
    <alternativeName>
        <fullName evidence="2">30S ribosomal protein S18</fullName>
    </alternativeName>
</protein>
<accession>Q7WL33</accession>
<organism>
    <name type="scientific">Bordetella bronchiseptica (strain ATCC BAA-588 / NCTC 13252 / RB50)</name>
    <name type="common">Alcaligenes bronchisepticus</name>
    <dbReference type="NCBI Taxonomy" id="257310"/>
    <lineage>
        <taxon>Bacteria</taxon>
        <taxon>Pseudomonadati</taxon>
        <taxon>Pseudomonadota</taxon>
        <taxon>Betaproteobacteria</taxon>
        <taxon>Burkholderiales</taxon>
        <taxon>Alcaligenaceae</taxon>
        <taxon>Bordetella</taxon>
    </lineage>
</organism>
<feature type="chain" id="PRO_0000111122" description="Small ribosomal subunit protein bS18">
    <location>
        <begin position="1"/>
        <end position="90"/>
    </location>
</feature>
<proteinExistence type="inferred from homology"/>
<reference key="1">
    <citation type="journal article" date="2003" name="Nat. Genet.">
        <title>Comparative analysis of the genome sequences of Bordetella pertussis, Bordetella parapertussis and Bordetella bronchiseptica.</title>
        <authorList>
            <person name="Parkhill J."/>
            <person name="Sebaihia M."/>
            <person name="Preston A."/>
            <person name="Murphy L.D."/>
            <person name="Thomson N.R."/>
            <person name="Harris D.E."/>
            <person name="Holden M.T.G."/>
            <person name="Churcher C.M."/>
            <person name="Bentley S.D."/>
            <person name="Mungall K.L."/>
            <person name="Cerdeno-Tarraga A.-M."/>
            <person name="Temple L."/>
            <person name="James K.D."/>
            <person name="Harris B."/>
            <person name="Quail M.A."/>
            <person name="Achtman M."/>
            <person name="Atkin R."/>
            <person name="Baker S."/>
            <person name="Basham D."/>
            <person name="Bason N."/>
            <person name="Cherevach I."/>
            <person name="Chillingworth T."/>
            <person name="Collins M."/>
            <person name="Cronin A."/>
            <person name="Davis P."/>
            <person name="Doggett J."/>
            <person name="Feltwell T."/>
            <person name="Goble A."/>
            <person name="Hamlin N."/>
            <person name="Hauser H."/>
            <person name="Holroyd S."/>
            <person name="Jagels K."/>
            <person name="Leather S."/>
            <person name="Moule S."/>
            <person name="Norberczak H."/>
            <person name="O'Neil S."/>
            <person name="Ormond D."/>
            <person name="Price C."/>
            <person name="Rabbinowitsch E."/>
            <person name="Rutter S."/>
            <person name="Sanders M."/>
            <person name="Saunders D."/>
            <person name="Seeger K."/>
            <person name="Sharp S."/>
            <person name="Simmonds M."/>
            <person name="Skelton J."/>
            <person name="Squares R."/>
            <person name="Squares S."/>
            <person name="Stevens K."/>
            <person name="Unwin L."/>
            <person name="Whitehead S."/>
            <person name="Barrell B.G."/>
            <person name="Maskell D.J."/>
        </authorList>
    </citation>
    <scope>NUCLEOTIDE SEQUENCE [LARGE SCALE GENOMIC DNA]</scope>
    <source>
        <strain>ATCC BAA-588 / NCTC 13252 / RB50</strain>
    </source>
</reference>
<name>RS18_BORBR</name>
<sequence length="90" mass="10711">MAFFGKRKEKRKFTQQNPLFKRRKFCRFTAAGVEEIDYKDLDTLRDFVQENGKIIPARLTGTRAIYQRQLDTAIKRARFLALLPYTDNHK</sequence>
<gene>
    <name evidence="1" type="primary">rpsR</name>
    <name type="ordered locus">BB1916</name>
</gene>
<keyword id="KW-0687">Ribonucleoprotein</keyword>
<keyword id="KW-0689">Ribosomal protein</keyword>
<keyword id="KW-0694">RNA-binding</keyword>
<keyword id="KW-0699">rRNA-binding</keyword>
<comment type="function">
    <text evidence="1">Binds as a heterodimer with protein bS6 to the central domain of the 16S rRNA, where it helps stabilize the platform of the 30S subunit.</text>
</comment>
<comment type="subunit">
    <text evidence="1">Part of the 30S ribosomal subunit. Forms a tight heterodimer with protein bS6.</text>
</comment>
<comment type="similarity">
    <text evidence="1">Belongs to the bacterial ribosomal protein bS18 family.</text>
</comment>
<dbReference type="EMBL" id="BX640442">
    <property type="protein sequence ID" value="CAE32413.1"/>
    <property type="molecule type" value="Genomic_DNA"/>
</dbReference>
<dbReference type="RefSeq" id="WP_003813094.1">
    <property type="nucleotide sequence ID" value="NC_002927.3"/>
</dbReference>
<dbReference type="SMR" id="Q7WL33"/>
<dbReference type="GeneID" id="93204252"/>
<dbReference type="KEGG" id="bbr:BB1916"/>
<dbReference type="eggNOG" id="COG0238">
    <property type="taxonomic scope" value="Bacteria"/>
</dbReference>
<dbReference type="HOGENOM" id="CLU_148710_0_3_4"/>
<dbReference type="Proteomes" id="UP000001027">
    <property type="component" value="Chromosome"/>
</dbReference>
<dbReference type="GO" id="GO:0022627">
    <property type="term" value="C:cytosolic small ribosomal subunit"/>
    <property type="evidence" value="ECO:0007669"/>
    <property type="project" value="TreeGrafter"/>
</dbReference>
<dbReference type="GO" id="GO:0070181">
    <property type="term" value="F:small ribosomal subunit rRNA binding"/>
    <property type="evidence" value="ECO:0007669"/>
    <property type="project" value="TreeGrafter"/>
</dbReference>
<dbReference type="GO" id="GO:0003735">
    <property type="term" value="F:structural constituent of ribosome"/>
    <property type="evidence" value="ECO:0007669"/>
    <property type="project" value="InterPro"/>
</dbReference>
<dbReference type="GO" id="GO:0006412">
    <property type="term" value="P:translation"/>
    <property type="evidence" value="ECO:0007669"/>
    <property type="project" value="UniProtKB-UniRule"/>
</dbReference>
<dbReference type="Gene3D" id="4.10.640.10">
    <property type="entry name" value="Ribosomal protein S18"/>
    <property type="match status" value="1"/>
</dbReference>
<dbReference type="HAMAP" id="MF_00270">
    <property type="entry name" value="Ribosomal_bS18"/>
    <property type="match status" value="1"/>
</dbReference>
<dbReference type="InterPro" id="IPR001648">
    <property type="entry name" value="Ribosomal_bS18"/>
</dbReference>
<dbReference type="InterPro" id="IPR018275">
    <property type="entry name" value="Ribosomal_bS18_CS"/>
</dbReference>
<dbReference type="InterPro" id="IPR036870">
    <property type="entry name" value="Ribosomal_bS18_sf"/>
</dbReference>
<dbReference type="NCBIfam" id="TIGR00165">
    <property type="entry name" value="S18"/>
    <property type="match status" value="1"/>
</dbReference>
<dbReference type="PANTHER" id="PTHR13479">
    <property type="entry name" value="30S RIBOSOMAL PROTEIN S18"/>
    <property type="match status" value="1"/>
</dbReference>
<dbReference type="PANTHER" id="PTHR13479:SF40">
    <property type="entry name" value="SMALL RIBOSOMAL SUBUNIT PROTEIN BS18M"/>
    <property type="match status" value="1"/>
</dbReference>
<dbReference type="Pfam" id="PF01084">
    <property type="entry name" value="Ribosomal_S18"/>
    <property type="match status" value="1"/>
</dbReference>
<dbReference type="PRINTS" id="PR00974">
    <property type="entry name" value="RIBOSOMALS18"/>
</dbReference>
<dbReference type="SUPFAM" id="SSF46911">
    <property type="entry name" value="Ribosomal protein S18"/>
    <property type="match status" value="1"/>
</dbReference>
<dbReference type="PROSITE" id="PS00057">
    <property type="entry name" value="RIBOSOMAL_S18"/>
    <property type="match status" value="1"/>
</dbReference>